<evidence type="ECO:0000250" key="1"/>
<evidence type="ECO:0000256" key="2">
    <source>
        <dbReference type="SAM" id="MobiDB-lite"/>
    </source>
</evidence>
<evidence type="ECO:0000305" key="3"/>
<organism>
    <name type="scientific">Debaryomyces hansenii (strain ATCC 36239 / CBS 767 / BCRC 21394 / JCM 1990 / NBRC 0083 / IGC 2968)</name>
    <name type="common">Yeast</name>
    <name type="synonym">Torulaspora hansenii</name>
    <dbReference type="NCBI Taxonomy" id="284592"/>
    <lineage>
        <taxon>Eukaryota</taxon>
        <taxon>Fungi</taxon>
        <taxon>Dikarya</taxon>
        <taxon>Ascomycota</taxon>
        <taxon>Saccharomycotina</taxon>
        <taxon>Pichiomycetes</taxon>
        <taxon>Debaryomycetaceae</taxon>
        <taxon>Debaryomyces</taxon>
    </lineage>
</organism>
<sequence>MRVLVFPSVLHSGQIHSIDINKDNSKILTSGLDKEINVWNLQEFVQLTTEGKDTVKDDIENVKPLLRITAHEDLVNIVKWCPQNENVFVSGDIQGKVYMHDISKNTHELIFPFGWKEDGTSRVVDLAWSDDGRMLAWSSGDCKIHIYDTEKATYQELTSLSNLEKLTVQRSIAFDPTNHYLISMGDDTSIYLYQYQYEPTTRNYQFRLINRISKLINKTSMNVDYKRISWSPDGEYVSVPTASKNQTSLISLLSRSNGWNNILSLVGHNLDCEVVQYNPMIYNSSENNDNPKLFNVIATAGSDMTLVVWNTTKDKPIFILQEISKKPIVDLCWDKTGNSLFVASLDGHLSIVSFHPQELGNTVSEELWKELFEAGEASIKPFNEKPDQDITPSTKKSSHNVIDILDQKNSINVHEAKAKKPTEGIKDLSSISPEEENADTESPLKQDLQAHDKQVTNFVPEVIPAIIEDAPETQTEDILHSAMSTTRSTKSQVKNPKEKPTKVTPEKAKVTTKNGKKRIQPMLISSMNENSSNNSVKKSNTSESNGTSNLVSSGKVLMEFDKPSYSISDDLYKQNKRTKTQDENSNKKLKRELEPVKFIGSVVLNPSTTFARIRLSIPKIRLNFQLSSTVEDNSFILDVKNGLGNETKPSRITYFKKEKQIWCDFIPRFIQLVAEGSTFWAVSTADGQILTYSHTSGKKLLPPIILGSPLSFLESHGNFLMAVTSIGELYVWNIEQKKIHLQSPSSLSSLLDLSNKYQEDGLSKSDNITMCSITNNGIPLITLSNGAGYLFNKDLGTWQTISESWWAFGSHYWDSLGNDDGSKPQSYGLFCDSNDSSIVGLLEQKTNESILRKTRAGRGKYFNKISKNMLMKEGFENLENTISLSHLENRILCCELLGEFKDFHDFFIIYVKRICELGFKAKLFEVCDQLLGPSEPNSTATKDGEANWNSEICGIKKHDLLKEVILSCAKNRDCQRILIHFGKKIGVIDIDEFN</sequence>
<feature type="chain" id="PRO_0000286421" description="Protein HIR2">
    <location>
        <begin position="1"/>
        <end position="994"/>
    </location>
</feature>
<feature type="repeat" description="WD 1">
    <location>
        <begin position="10"/>
        <end position="49"/>
    </location>
</feature>
<feature type="repeat" description="WD 2">
    <location>
        <begin position="70"/>
        <end position="110"/>
    </location>
</feature>
<feature type="repeat" description="WD 3">
    <location>
        <begin position="118"/>
        <end position="157"/>
    </location>
</feature>
<feature type="repeat" description="WD 4">
    <location>
        <begin position="164"/>
        <end position="203"/>
    </location>
</feature>
<feature type="repeat" description="WD 5">
    <location>
        <begin position="220"/>
        <end position="263"/>
    </location>
</feature>
<feature type="repeat" description="WD 6">
    <location>
        <begin position="276"/>
        <end position="319"/>
    </location>
</feature>
<feature type="repeat" description="WD 7">
    <location>
        <begin position="323"/>
        <end position="364"/>
    </location>
</feature>
<feature type="region of interest" description="Disordered" evidence="2">
    <location>
        <begin position="413"/>
        <end position="445"/>
    </location>
</feature>
<feature type="region of interest" description="Disordered" evidence="2">
    <location>
        <begin position="482"/>
        <end position="550"/>
    </location>
</feature>
<feature type="compositionally biased region" description="Basic and acidic residues" evidence="2">
    <location>
        <begin position="414"/>
        <end position="426"/>
    </location>
</feature>
<feature type="compositionally biased region" description="Polar residues" evidence="2">
    <location>
        <begin position="482"/>
        <end position="492"/>
    </location>
</feature>
<feature type="compositionally biased region" description="Basic and acidic residues" evidence="2">
    <location>
        <begin position="495"/>
        <end position="509"/>
    </location>
</feature>
<feature type="compositionally biased region" description="Low complexity" evidence="2">
    <location>
        <begin position="525"/>
        <end position="545"/>
    </location>
</feature>
<proteinExistence type="inferred from homology"/>
<gene>
    <name type="primary">HIR2</name>
    <name type="ordered locus">DEHA2G08184g</name>
</gene>
<accession>Q6BIR7</accession>
<protein>
    <recommendedName>
        <fullName>Protein HIR2</fullName>
    </recommendedName>
</protein>
<comment type="function">
    <text evidence="1">Required for replication-independent chromatin assembly and for the periodic repression of histone gene transcription during the cell cycle.</text>
</comment>
<comment type="subcellular location">
    <subcellularLocation>
        <location evidence="1">Nucleus</location>
    </subcellularLocation>
</comment>
<comment type="similarity">
    <text evidence="3">Belongs to the WD repeat HIR1 family.</text>
</comment>
<comment type="sequence caution" evidence="3">
    <conflict type="erroneous initiation">
        <sequence resource="EMBL-CDS" id="CAG90367"/>
    </conflict>
</comment>
<dbReference type="EMBL" id="CR382139">
    <property type="protein sequence ID" value="CAG90367.2"/>
    <property type="status" value="ALT_INIT"/>
    <property type="molecule type" value="Genomic_DNA"/>
</dbReference>
<dbReference type="RefSeq" id="XP_461904.2">
    <property type="nucleotide sequence ID" value="XM_461904.2"/>
</dbReference>
<dbReference type="SMR" id="Q6BIR7"/>
<dbReference type="FunCoup" id="Q6BIR7">
    <property type="interactions" value="463"/>
</dbReference>
<dbReference type="STRING" id="284592.Q6BIR7"/>
<dbReference type="GeneID" id="2904785"/>
<dbReference type="KEGG" id="dha:DEHA2G08184g"/>
<dbReference type="eggNOG" id="KOG0973">
    <property type="taxonomic scope" value="Eukaryota"/>
</dbReference>
<dbReference type="HOGENOM" id="CLU_004372_3_0_1"/>
<dbReference type="InParanoid" id="Q6BIR7"/>
<dbReference type="OrthoDB" id="1741719at2759"/>
<dbReference type="Proteomes" id="UP000000599">
    <property type="component" value="Chromosome G"/>
</dbReference>
<dbReference type="GO" id="GO:0000785">
    <property type="term" value="C:chromatin"/>
    <property type="evidence" value="ECO:0007669"/>
    <property type="project" value="TreeGrafter"/>
</dbReference>
<dbReference type="GO" id="GO:0000417">
    <property type="term" value="C:HIR complex"/>
    <property type="evidence" value="ECO:0007669"/>
    <property type="project" value="TreeGrafter"/>
</dbReference>
<dbReference type="GO" id="GO:0005634">
    <property type="term" value="C:nucleus"/>
    <property type="evidence" value="ECO:0007669"/>
    <property type="project" value="UniProtKB-SubCell"/>
</dbReference>
<dbReference type="GO" id="GO:0031491">
    <property type="term" value="F:nucleosome binding"/>
    <property type="evidence" value="ECO:0007669"/>
    <property type="project" value="TreeGrafter"/>
</dbReference>
<dbReference type="GO" id="GO:0006338">
    <property type="term" value="P:chromatin remodeling"/>
    <property type="evidence" value="ECO:0007669"/>
    <property type="project" value="InterPro"/>
</dbReference>
<dbReference type="GO" id="GO:0006351">
    <property type="term" value="P:DNA-templated transcription"/>
    <property type="evidence" value="ECO:0007669"/>
    <property type="project" value="InterPro"/>
</dbReference>
<dbReference type="GO" id="GO:0006355">
    <property type="term" value="P:regulation of DNA-templated transcription"/>
    <property type="evidence" value="ECO:0007669"/>
    <property type="project" value="InterPro"/>
</dbReference>
<dbReference type="Gene3D" id="2.130.10.10">
    <property type="entry name" value="YVTN repeat-like/Quinoprotein amine dehydrogenase"/>
    <property type="match status" value="2"/>
</dbReference>
<dbReference type="InterPro" id="IPR055410">
    <property type="entry name" value="CAF1B_HIR1_beta-prop"/>
</dbReference>
<dbReference type="InterPro" id="IPR031120">
    <property type="entry name" value="HIR1-like"/>
</dbReference>
<dbReference type="InterPro" id="IPR011494">
    <property type="entry name" value="HIRA-like_C"/>
</dbReference>
<dbReference type="InterPro" id="IPR019015">
    <property type="entry name" value="HIRA_B_motif"/>
</dbReference>
<dbReference type="InterPro" id="IPR011044">
    <property type="entry name" value="Quino_amine_DH_bsu"/>
</dbReference>
<dbReference type="InterPro" id="IPR015943">
    <property type="entry name" value="WD40/YVTN_repeat-like_dom_sf"/>
</dbReference>
<dbReference type="InterPro" id="IPR019775">
    <property type="entry name" value="WD40_repeat_CS"/>
</dbReference>
<dbReference type="InterPro" id="IPR036322">
    <property type="entry name" value="WD40_repeat_dom_sf"/>
</dbReference>
<dbReference type="InterPro" id="IPR001680">
    <property type="entry name" value="WD40_rpt"/>
</dbReference>
<dbReference type="PANTHER" id="PTHR13831">
    <property type="entry name" value="MEMBER OF THE HIR1 FAMILY OF WD-REPEAT PROTEINS"/>
    <property type="match status" value="1"/>
</dbReference>
<dbReference type="PANTHER" id="PTHR13831:SF1">
    <property type="entry name" value="PROTEIN HIR2"/>
    <property type="match status" value="1"/>
</dbReference>
<dbReference type="Pfam" id="PF24105">
    <property type="entry name" value="Beta-prop_CAF1B_HIR1"/>
    <property type="match status" value="1"/>
</dbReference>
<dbReference type="Pfam" id="PF07569">
    <property type="entry name" value="Hira"/>
    <property type="match status" value="1"/>
</dbReference>
<dbReference type="Pfam" id="PF09453">
    <property type="entry name" value="HIRA_B"/>
    <property type="match status" value="1"/>
</dbReference>
<dbReference type="SMART" id="SM00320">
    <property type="entry name" value="WD40"/>
    <property type="match status" value="6"/>
</dbReference>
<dbReference type="SUPFAM" id="SSF50978">
    <property type="entry name" value="WD40 repeat-like"/>
    <property type="match status" value="1"/>
</dbReference>
<dbReference type="SUPFAM" id="SSF50969">
    <property type="entry name" value="YVTN repeat-like/Quinoprotein amine dehydrogenase"/>
    <property type="match status" value="1"/>
</dbReference>
<dbReference type="PROSITE" id="PS00678">
    <property type="entry name" value="WD_REPEATS_1"/>
    <property type="match status" value="2"/>
</dbReference>
<dbReference type="PROSITE" id="PS50082">
    <property type="entry name" value="WD_REPEATS_2"/>
    <property type="match status" value="1"/>
</dbReference>
<dbReference type="PROSITE" id="PS50294">
    <property type="entry name" value="WD_REPEATS_REGION"/>
    <property type="match status" value="1"/>
</dbReference>
<keyword id="KW-0156">Chromatin regulator</keyword>
<keyword id="KW-0539">Nucleus</keyword>
<keyword id="KW-1185">Reference proteome</keyword>
<keyword id="KW-0677">Repeat</keyword>
<keyword id="KW-0678">Repressor</keyword>
<keyword id="KW-0804">Transcription</keyword>
<keyword id="KW-0805">Transcription regulation</keyword>
<keyword id="KW-0853">WD repeat</keyword>
<reference key="1">
    <citation type="journal article" date="2004" name="Nature">
        <title>Genome evolution in yeasts.</title>
        <authorList>
            <person name="Dujon B."/>
            <person name="Sherman D."/>
            <person name="Fischer G."/>
            <person name="Durrens P."/>
            <person name="Casaregola S."/>
            <person name="Lafontaine I."/>
            <person name="de Montigny J."/>
            <person name="Marck C."/>
            <person name="Neuveglise C."/>
            <person name="Talla E."/>
            <person name="Goffard N."/>
            <person name="Frangeul L."/>
            <person name="Aigle M."/>
            <person name="Anthouard V."/>
            <person name="Babour A."/>
            <person name="Barbe V."/>
            <person name="Barnay S."/>
            <person name="Blanchin S."/>
            <person name="Beckerich J.-M."/>
            <person name="Beyne E."/>
            <person name="Bleykasten C."/>
            <person name="Boisrame A."/>
            <person name="Boyer J."/>
            <person name="Cattolico L."/>
            <person name="Confanioleri F."/>
            <person name="de Daruvar A."/>
            <person name="Despons L."/>
            <person name="Fabre E."/>
            <person name="Fairhead C."/>
            <person name="Ferry-Dumazet H."/>
            <person name="Groppi A."/>
            <person name="Hantraye F."/>
            <person name="Hennequin C."/>
            <person name="Jauniaux N."/>
            <person name="Joyet P."/>
            <person name="Kachouri R."/>
            <person name="Kerrest A."/>
            <person name="Koszul R."/>
            <person name="Lemaire M."/>
            <person name="Lesur I."/>
            <person name="Ma L."/>
            <person name="Muller H."/>
            <person name="Nicaud J.-M."/>
            <person name="Nikolski M."/>
            <person name="Oztas S."/>
            <person name="Ozier-Kalogeropoulos O."/>
            <person name="Pellenz S."/>
            <person name="Potier S."/>
            <person name="Richard G.-F."/>
            <person name="Straub M.-L."/>
            <person name="Suleau A."/>
            <person name="Swennen D."/>
            <person name="Tekaia F."/>
            <person name="Wesolowski-Louvel M."/>
            <person name="Westhof E."/>
            <person name="Wirth B."/>
            <person name="Zeniou-Meyer M."/>
            <person name="Zivanovic Y."/>
            <person name="Bolotin-Fukuhara M."/>
            <person name="Thierry A."/>
            <person name="Bouchier C."/>
            <person name="Caudron B."/>
            <person name="Scarpelli C."/>
            <person name="Gaillardin C."/>
            <person name="Weissenbach J."/>
            <person name="Wincker P."/>
            <person name="Souciet J.-L."/>
        </authorList>
    </citation>
    <scope>NUCLEOTIDE SEQUENCE [LARGE SCALE GENOMIC DNA]</scope>
    <source>
        <strain>ATCC 36239 / CBS 767 / BCRC 21394 / JCM 1990 / NBRC 0083 / IGC 2968</strain>
    </source>
</reference>
<name>HIR2_DEBHA</name>